<feature type="chain" id="PRO_0000416932" description="U2 small nuclear ribonucleoprotein B''">
    <location>
        <begin position="1"/>
        <end position="232"/>
    </location>
</feature>
<feature type="domain" description="RRM 1" evidence="3">
    <location>
        <begin position="10"/>
        <end position="89"/>
    </location>
</feature>
<feature type="domain" description="RRM 2" evidence="3">
    <location>
        <begin position="158"/>
        <end position="232"/>
    </location>
</feature>
<feature type="region of interest" description="Disordered" evidence="4">
    <location>
        <begin position="92"/>
        <end position="159"/>
    </location>
</feature>
<feature type="compositionally biased region" description="Basic and acidic residues" evidence="4">
    <location>
        <begin position="108"/>
        <end position="123"/>
    </location>
</feature>
<feature type="compositionally biased region" description="Polar residues" evidence="4">
    <location>
        <begin position="127"/>
        <end position="151"/>
    </location>
</feature>
<name>RU2B_ORYSI</name>
<accession>B8AM21</accession>
<protein>
    <recommendedName>
        <fullName>U2 small nuclear ribonucleoprotein B''</fullName>
        <shortName>U2 snRNP B''</shortName>
    </recommendedName>
</protein>
<organism>
    <name type="scientific">Oryza sativa subsp. indica</name>
    <name type="common">Rice</name>
    <dbReference type="NCBI Taxonomy" id="39946"/>
    <lineage>
        <taxon>Eukaryota</taxon>
        <taxon>Viridiplantae</taxon>
        <taxon>Streptophyta</taxon>
        <taxon>Embryophyta</taxon>
        <taxon>Tracheophyta</taxon>
        <taxon>Spermatophyta</taxon>
        <taxon>Magnoliopsida</taxon>
        <taxon>Liliopsida</taxon>
        <taxon>Poales</taxon>
        <taxon>Poaceae</taxon>
        <taxon>BOP clade</taxon>
        <taxon>Oryzoideae</taxon>
        <taxon>Oryzeae</taxon>
        <taxon>Oryzinae</taxon>
        <taxon>Oryza</taxon>
        <taxon>Oryza sativa</taxon>
    </lineage>
</organism>
<reference key="1">
    <citation type="journal article" date="2005" name="PLoS Biol.">
        <title>The genomes of Oryza sativa: a history of duplications.</title>
        <authorList>
            <person name="Yu J."/>
            <person name="Wang J."/>
            <person name="Lin W."/>
            <person name="Li S."/>
            <person name="Li H."/>
            <person name="Zhou J."/>
            <person name="Ni P."/>
            <person name="Dong W."/>
            <person name="Hu S."/>
            <person name="Zeng C."/>
            <person name="Zhang J."/>
            <person name="Zhang Y."/>
            <person name="Li R."/>
            <person name="Xu Z."/>
            <person name="Li S."/>
            <person name="Li X."/>
            <person name="Zheng H."/>
            <person name="Cong L."/>
            <person name="Lin L."/>
            <person name="Yin J."/>
            <person name="Geng J."/>
            <person name="Li G."/>
            <person name="Shi J."/>
            <person name="Liu J."/>
            <person name="Lv H."/>
            <person name="Li J."/>
            <person name="Wang J."/>
            <person name="Deng Y."/>
            <person name="Ran L."/>
            <person name="Shi X."/>
            <person name="Wang X."/>
            <person name="Wu Q."/>
            <person name="Li C."/>
            <person name="Ren X."/>
            <person name="Wang J."/>
            <person name="Wang X."/>
            <person name="Li D."/>
            <person name="Liu D."/>
            <person name="Zhang X."/>
            <person name="Ji Z."/>
            <person name="Zhao W."/>
            <person name="Sun Y."/>
            <person name="Zhang Z."/>
            <person name="Bao J."/>
            <person name="Han Y."/>
            <person name="Dong L."/>
            <person name="Ji J."/>
            <person name="Chen P."/>
            <person name="Wu S."/>
            <person name="Liu J."/>
            <person name="Xiao Y."/>
            <person name="Bu D."/>
            <person name="Tan J."/>
            <person name="Yang L."/>
            <person name="Ye C."/>
            <person name="Zhang J."/>
            <person name="Xu J."/>
            <person name="Zhou Y."/>
            <person name="Yu Y."/>
            <person name="Zhang B."/>
            <person name="Zhuang S."/>
            <person name="Wei H."/>
            <person name="Liu B."/>
            <person name="Lei M."/>
            <person name="Yu H."/>
            <person name="Li Y."/>
            <person name="Xu H."/>
            <person name="Wei S."/>
            <person name="He X."/>
            <person name="Fang L."/>
            <person name="Zhang Z."/>
            <person name="Zhang Y."/>
            <person name="Huang X."/>
            <person name="Su Z."/>
            <person name="Tong W."/>
            <person name="Li J."/>
            <person name="Tong Z."/>
            <person name="Li S."/>
            <person name="Ye J."/>
            <person name="Wang L."/>
            <person name="Fang L."/>
            <person name="Lei T."/>
            <person name="Chen C.-S."/>
            <person name="Chen H.-C."/>
            <person name="Xu Z."/>
            <person name="Li H."/>
            <person name="Huang H."/>
            <person name="Zhang F."/>
            <person name="Xu H."/>
            <person name="Li N."/>
            <person name="Zhao C."/>
            <person name="Li S."/>
            <person name="Dong L."/>
            <person name="Huang Y."/>
            <person name="Li L."/>
            <person name="Xi Y."/>
            <person name="Qi Q."/>
            <person name="Li W."/>
            <person name="Zhang B."/>
            <person name="Hu W."/>
            <person name="Zhang Y."/>
            <person name="Tian X."/>
            <person name="Jiao Y."/>
            <person name="Liang X."/>
            <person name="Jin J."/>
            <person name="Gao L."/>
            <person name="Zheng W."/>
            <person name="Hao B."/>
            <person name="Liu S.-M."/>
            <person name="Wang W."/>
            <person name="Yuan L."/>
            <person name="Cao M."/>
            <person name="McDermott J."/>
            <person name="Samudrala R."/>
            <person name="Wang J."/>
            <person name="Wong G.K.-S."/>
            <person name="Yang H."/>
        </authorList>
    </citation>
    <scope>NUCLEOTIDE SEQUENCE [LARGE SCALE GENOMIC DNA]</scope>
    <source>
        <strain>cv. 93-11</strain>
    </source>
</reference>
<sequence length="232" mass="26073">MLSGDIPPNQTVYLRNLNEKVKKEELKRSLYALCSQYGRILDVVALKTPKLRGQAWVVFSEITAATNAFRGLQEFDFYGKRMRVQYAKTKSDCLATEDGSTAPKEKRKKQEEKAAEKKRRAEEAQQSGPNAAAQSNGTGYQASRLGKTSQEPPAPPNNILFIQNLPAETTSMMLQILFQQYPGFREVRMIEAKPGIAFVEYEDDSQSMVAMQALQGFKITPYNPMAISYAKK</sequence>
<comment type="function">
    <text evidence="1">Involved in nuclear pre-mRNA splicing.</text>
</comment>
<comment type="subunit">
    <text evidence="1">Component of the spliceosome where it is associated with snRNP U2.</text>
</comment>
<comment type="subcellular location">
    <subcellularLocation>
        <location evidence="2">Nucleus</location>
        <location evidence="2">Cajal body</location>
    </subcellularLocation>
    <subcellularLocation>
        <location evidence="2">Nucleus</location>
        <location evidence="2">Nucleoplasm</location>
    </subcellularLocation>
    <subcellularLocation>
        <location evidence="2">Cytoplasm</location>
    </subcellularLocation>
    <text evidence="2">Present in coiled bodies and an interchromatin network. Redistributed throughout the cytoplasm upon entry into mitosis. Also detected in central nucleolar vacuole.</text>
</comment>
<comment type="similarity">
    <text evidence="5">Belongs to the RRM U1 A/B'' family.</text>
</comment>
<keyword id="KW-0963">Cytoplasm</keyword>
<keyword id="KW-0507">mRNA processing</keyword>
<keyword id="KW-0508">mRNA splicing</keyword>
<keyword id="KW-0539">Nucleus</keyword>
<keyword id="KW-1185">Reference proteome</keyword>
<keyword id="KW-0677">Repeat</keyword>
<keyword id="KW-0687">Ribonucleoprotein</keyword>
<keyword id="KW-0694">RNA-binding</keyword>
<keyword id="KW-0747">Spliceosome</keyword>
<gene>
    <name type="ORF">OsI_11177</name>
</gene>
<proteinExistence type="inferred from homology"/>
<dbReference type="EMBL" id="CM000128">
    <property type="protein sequence ID" value="EEC75061.1"/>
    <property type="molecule type" value="Genomic_DNA"/>
</dbReference>
<dbReference type="SMR" id="B8AM21"/>
<dbReference type="STRING" id="39946.B8AM21"/>
<dbReference type="EnsemblPlants" id="BGIOSGA010914-TA">
    <property type="protein sequence ID" value="BGIOSGA010914-PA"/>
    <property type="gene ID" value="BGIOSGA010914"/>
</dbReference>
<dbReference type="EnsemblPlants" id="OsGoSa_03g0014300.01">
    <property type="protein sequence ID" value="OsGoSa_03g0014300.01"/>
    <property type="gene ID" value="OsGoSa_03g0014300"/>
</dbReference>
<dbReference type="EnsemblPlants" id="OsIR64_03g0013990.01">
    <property type="protein sequence ID" value="OsIR64_03g0013990.01"/>
    <property type="gene ID" value="OsIR64_03g0013990"/>
</dbReference>
<dbReference type="EnsemblPlants" id="OsKYG_03g0014220.01">
    <property type="protein sequence ID" value="OsKYG_03g0014220.01"/>
    <property type="gene ID" value="OsKYG_03g0014220"/>
</dbReference>
<dbReference type="EnsemblPlants" id="OsLaMu_03g0014100.01">
    <property type="protein sequence ID" value="OsLaMu_03g0014100.01"/>
    <property type="gene ID" value="OsLaMu_03g0014100"/>
</dbReference>
<dbReference type="EnsemblPlants" id="OsLima_03g0014240.01">
    <property type="protein sequence ID" value="OsLima_03g0014240.01"/>
    <property type="gene ID" value="OsLima_03g0014240"/>
</dbReference>
<dbReference type="EnsemblPlants" id="OsLiXu_03g0014130.01">
    <property type="protein sequence ID" value="OsLiXu_03g0014130.01"/>
    <property type="gene ID" value="OsLiXu_03g0014130"/>
</dbReference>
<dbReference type="EnsemblPlants" id="OsMH63_03G014150_01">
    <property type="protein sequence ID" value="OsMH63_03G014150_01"/>
    <property type="gene ID" value="OsMH63_03G014150"/>
</dbReference>
<dbReference type="EnsemblPlants" id="OsPr106_03g0014080.01">
    <property type="protein sequence ID" value="OsPr106_03g0014080.01"/>
    <property type="gene ID" value="OsPr106_03g0014080"/>
</dbReference>
<dbReference type="EnsemblPlants" id="OsZS97_03G014090_01">
    <property type="protein sequence ID" value="OsZS97_03G014090_01"/>
    <property type="gene ID" value="OsZS97_03G014090"/>
</dbReference>
<dbReference type="Gramene" id="BGIOSGA010914-TA">
    <property type="protein sequence ID" value="BGIOSGA010914-PA"/>
    <property type="gene ID" value="BGIOSGA010914"/>
</dbReference>
<dbReference type="Gramene" id="OsGoSa_03g0014300.01">
    <property type="protein sequence ID" value="OsGoSa_03g0014300.01"/>
    <property type="gene ID" value="OsGoSa_03g0014300"/>
</dbReference>
<dbReference type="Gramene" id="OsIR64_03g0013990.01">
    <property type="protein sequence ID" value="OsIR64_03g0013990.01"/>
    <property type="gene ID" value="OsIR64_03g0013990"/>
</dbReference>
<dbReference type="Gramene" id="OsKYG_03g0014220.01">
    <property type="protein sequence ID" value="OsKYG_03g0014220.01"/>
    <property type="gene ID" value="OsKYG_03g0014220"/>
</dbReference>
<dbReference type="Gramene" id="OsLaMu_03g0014100.01">
    <property type="protein sequence ID" value="OsLaMu_03g0014100.01"/>
    <property type="gene ID" value="OsLaMu_03g0014100"/>
</dbReference>
<dbReference type="Gramene" id="OsLima_03g0014240.01">
    <property type="protein sequence ID" value="OsLima_03g0014240.01"/>
    <property type="gene ID" value="OsLima_03g0014240"/>
</dbReference>
<dbReference type="Gramene" id="OsLiXu_03g0014130.01">
    <property type="protein sequence ID" value="OsLiXu_03g0014130.01"/>
    <property type="gene ID" value="OsLiXu_03g0014130"/>
</dbReference>
<dbReference type="Gramene" id="OsMH63_03G014150_01">
    <property type="protein sequence ID" value="OsMH63_03G014150_01"/>
    <property type="gene ID" value="OsMH63_03G014150"/>
</dbReference>
<dbReference type="Gramene" id="OsPr106_03g0014080.01">
    <property type="protein sequence ID" value="OsPr106_03g0014080.01"/>
    <property type="gene ID" value="OsPr106_03g0014080"/>
</dbReference>
<dbReference type="Gramene" id="OsZS97_03G014090_01">
    <property type="protein sequence ID" value="OsZS97_03G014090_01"/>
    <property type="gene ID" value="OsZS97_03G014090"/>
</dbReference>
<dbReference type="HOGENOM" id="CLU_041869_1_1_1"/>
<dbReference type="OMA" id="VRMIPTK"/>
<dbReference type="OrthoDB" id="277802at2759"/>
<dbReference type="Proteomes" id="UP000007015">
    <property type="component" value="Chromosome 3"/>
</dbReference>
<dbReference type="GO" id="GO:0015030">
    <property type="term" value="C:Cajal body"/>
    <property type="evidence" value="ECO:0000250"/>
    <property type="project" value="UniProtKB"/>
</dbReference>
<dbReference type="GO" id="GO:0005737">
    <property type="term" value="C:cytoplasm"/>
    <property type="evidence" value="ECO:0007669"/>
    <property type="project" value="UniProtKB-SubCell"/>
</dbReference>
<dbReference type="GO" id="GO:0005654">
    <property type="term" value="C:nucleoplasm"/>
    <property type="evidence" value="ECO:0000250"/>
    <property type="project" value="UniProtKB"/>
</dbReference>
<dbReference type="GO" id="GO:0005681">
    <property type="term" value="C:spliceosomal complex"/>
    <property type="evidence" value="ECO:0007669"/>
    <property type="project" value="UniProtKB-KW"/>
</dbReference>
<dbReference type="GO" id="GO:0005686">
    <property type="term" value="C:U2 snRNP"/>
    <property type="evidence" value="ECO:0000250"/>
    <property type="project" value="UniProtKB"/>
</dbReference>
<dbReference type="GO" id="GO:0003723">
    <property type="term" value="F:RNA binding"/>
    <property type="evidence" value="ECO:0007669"/>
    <property type="project" value="UniProtKB-KW"/>
</dbReference>
<dbReference type="GO" id="GO:0006397">
    <property type="term" value="P:mRNA processing"/>
    <property type="evidence" value="ECO:0007669"/>
    <property type="project" value="UniProtKB-KW"/>
</dbReference>
<dbReference type="GO" id="GO:0008380">
    <property type="term" value="P:RNA splicing"/>
    <property type="evidence" value="ECO:0007669"/>
    <property type="project" value="UniProtKB-KW"/>
</dbReference>
<dbReference type="CDD" id="cd12246">
    <property type="entry name" value="RRM1_U1A_like"/>
    <property type="match status" value="1"/>
</dbReference>
<dbReference type="CDD" id="cd12247">
    <property type="entry name" value="RRM2_U1A_like"/>
    <property type="match status" value="1"/>
</dbReference>
<dbReference type="FunFam" id="3.30.70.330:FF:000039">
    <property type="entry name" value="U1 small nuclear ribonucleoprotein A"/>
    <property type="match status" value="1"/>
</dbReference>
<dbReference type="FunFam" id="3.30.70.330:FF:000029">
    <property type="entry name" value="U2 small nuclear ribonucleoprotein B"/>
    <property type="match status" value="1"/>
</dbReference>
<dbReference type="Gene3D" id="3.30.70.330">
    <property type="match status" value="2"/>
</dbReference>
<dbReference type="InterPro" id="IPR012677">
    <property type="entry name" value="Nucleotide-bd_a/b_plait_sf"/>
</dbReference>
<dbReference type="InterPro" id="IPR035979">
    <property type="entry name" value="RBD_domain_sf"/>
</dbReference>
<dbReference type="InterPro" id="IPR000504">
    <property type="entry name" value="RRM_dom"/>
</dbReference>
<dbReference type="PANTHER" id="PTHR10501">
    <property type="entry name" value="U1 SMALL NUCLEAR RIBONUCLEOPROTEIN A/U2 SMALL NUCLEAR RIBONUCLEOPROTEIN B"/>
    <property type="match status" value="1"/>
</dbReference>
<dbReference type="Pfam" id="PF00076">
    <property type="entry name" value="RRM_1"/>
    <property type="match status" value="2"/>
</dbReference>
<dbReference type="SMART" id="SM00360">
    <property type="entry name" value="RRM"/>
    <property type="match status" value="2"/>
</dbReference>
<dbReference type="SUPFAM" id="SSF54928">
    <property type="entry name" value="RNA-binding domain, RBD"/>
    <property type="match status" value="1"/>
</dbReference>
<dbReference type="PROSITE" id="PS50102">
    <property type="entry name" value="RRM"/>
    <property type="match status" value="2"/>
</dbReference>
<evidence type="ECO:0000250" key="1"/>
<evidence type="ECO:0000250" key="2">
    <source>
        <dbReference type="UniProtKB" id="O22922"/>
    </source>
</evidence>
<evidence type="ECO:0000255" key="3">
    <source>
        <dbReference type="PROSITE-ProRule" id="PRU00176"/>
    </source>
</evidence>
<evidence type="ECO:0000256" key="4">
    <source>
        <dbReference type="SAM" id="MobiDB-lite"/>
    </source>
</evidence>
<evidence type="ECO:0000305" key="5"/>